<protein>
    <recommendedName>
        <fullName evidence="1">NAD(P)H-quinone oxidoreductase subunit 3, chloroplastic</fullName>
        <ecNumber evidence="1">7.1.1.-</ecNumber>
    </recommendedName>
    <alternativeName>
        <fullName evidence="1">NAD(P)H dehydrogenase subunit 3</fullName>
    </alternativeName>
    <alternativeName>
        <fullName evidence="1">NADH-plastoquinone oxidoreductase subunit 3</fullName>
    </alternativeName>
</protein>
<organism>
    <name type="scientific">Guizotia abyssinica</name>
    <name type="common">Niger</name>
    <name type="synonym">Ramtilla</name>
    <dbReference type="NCBI Taxonomy" id="4230"/>
    <lineage>
        <taxon>Eukaryota</taxon>
        <taxon>Viridiplantae</taxon>
        <taxon>Streptophyta</taxon>
        <taxon>Embryophyta</taxon>
        <taxon>Tracheophyta</taxon>
        <taxon>Spermatophyta</taxon>
        <taxon>Magnoliopsida</taxon>
        <taxon>eudicotyledons</taxon>
        <taxon>Gunneridae</taxon>
        <taxon>Pentapetalae</taxon>
        <taxon>asterids</taxon>
        <taxon>campanulids</taxon>
        <taxon>Asterales</taxon>
        <taxon>Asteraceae</taxon>
        <taxon>Asteroideae</taxon>
        <taxon>Heliantheae alliance</taxon>
        <taxon>Millerieae</taxon>
        <taxon>Guizotia</taxon>
    </lineage>
</organism>
<proteinExistence type="inferred from homology"/>
<evidence type="ECO:0000255" key="1">
    <source>
        <dbReference type="HAMAP-Rule" id="MF_01394"/>
    </source>
</evidence>
<comment type="function">
    <text evidence="1">NDH shuttles electrons from NAD(P)H:plastoquinone, via FMN and iron-sulfur (Fe-S) centers, to quinones in the photosynthetic chain and possibly in a chloroplast respiratory chain. The immediate electron acceptor for the enzyme in this species is believed to be plastoquinone. Couples the redox reaction to proton translocation, and thus conserves the redox energy in a proton gradient.</text>
</comment>
<comment type="catalytic activity">
    <reaction evidence="1">
        <text>a plastoquinone + NADH + (n+1) H(+)(in) = a plastoquinol + NAD(+) + n H(+)(out)</text>
        <dbReference type="Rhea" id="RHEA:42608"/>
        <dbReference type="Rhea" id="RHEA-COMP:9561"/>
        <dbReference type="Rhea" id="RHEA-COMP:9562"/>
        <dbReference type="ChEBI" id="CHEBI:15378"/>
        <dbReference type="ChEBI" id="CHEBI:17757"/>
        <dbReference type="ChEBI" id="CHEBI:57540"/>
        <dbReference type="ChEBI" id="CHEBI:57945"/>
        <dbReference type="ChEBI" id="CHEBI:62192"/>
    </reaction>
</comment>
<comment type="catalytic activity">
    <reaction evidence="1">
        <text>a plastoquinone + NADPH + (n+1) H(+)(in) = a plastoquinol + NADP(+) + n H(+)(out)</text>
        <dbReference type="Rhea" id="RHEA:42612"/>
        <dbReference type="Rhea" id="RHEA-COMP:9561"/>
        <dbReference type="Rhea" id="RHEA-COMP:9562"/>
        <dbReference type="ChEBI" id="CHEBI:15378"/>
        <dbReference type="ChEBI" id="CHEBI:17757"/>
        <dbReference type="ChEBI" id="CHEBI:57783"/>
        <dbReference type="ChEBI" id="CHEBI:58349"/>
        <dbReference type="ChEBI" id="CHEBI:62192"/>
    </reaction>
</comment>
<comment type="subunit">
    <text evidence="1">NDH is composed of at least 16 different subunits, 5 of which are encoded in the nucleus.</text>
</comment>
<comment type="subcellular location">
    <subcellularLocation>
        <location evidence="1">Plastid</location>
        <location evidence="1">Chloroplast thylakoid membrane</location>
        <topology evidence="1">Multi-pass membrane protein</topology>
    </subcellularLocation>
</comment>
<comment type="similarity">
    <text evidence="1">Belongs to the complex I subunit 3 family.</text>
</comment>
<gene>
    <name evidence="1" type="primary">ndhC</name>
    <name type="ordered locus">GuabCp026</name>
</gene>
<name>NU3C_GUIAB</name>
<sequence length="120" mass="13860">MFLLYEYDIFWAFLIISSLIPILVFFISGFLAPSSKGPEKLSSYESGIEPIGDAWLQFRIRYYMFALVFVVFDVETVFLYPWAMSFDVLGVSVFVEALIFVLILIVGLVYAWRKGALEWS</sequence>
<reference key="1">
    <citation type="submission" date="2008-03" db="EMBL/GenBank/DDBJ databases">
        <title>Guizotia abyssinica chloroplast sequenced using Solexa.</title>
        <authorList>
            <person name="Kane N.C."/>
            <person name="Dempewolf H."/>
            <person name="Stewart M.L."/>
            <person name="Cronk Q."/>
            <person name="Rieseberrg L.H."/>
        </authorList>
    </citation>
    <scope>NUCLEOTIDE SEQUENCE [LARGE SCALE GENOMIC DNA]</scope>
    <source>
        <strain>cv. PI 508077</strain>
    </source>
</reference>
<dbReference type="EC" id="7.1.1.-" evidence="1"/>
<dbReference type="EMBL" id="EU549769">
    <property type="protein sequence ID" value="ACB86532.1"/>
    <property type="molecule type" value="Genomic_DNA"/>
</dbReference>
<dbReference type="RefSeq" id="YP_001837365.1">
    <property type="nucleotide sequence ID" value="NC_010601.1"/>
</dbReference>
<dbReference type="SMR" id="B2LMJ8"/>
<dbReference type="GeneID" id="6219160"/>
<dbReference type="GO" id="GO:0009535">
    <property type="term" value="C:chloroplast thylakoid membrane"/>
    <property type="evidence" value="ECO:0007669"/>
    <property type="project" value="UniProtKB-SubCell"/>
</dbReference>
<dbReference type="GO" id="GO:0030964">
    <property type="term" value="C:NADH dehydrogenase complex"/>
    <property type="evidence" value="ECO:0007669"/>
    <property type="project" value="TreeGrafter"/>
</dbReference>
<dbReference type="GO" id="GO:0008137">
    <property type="term" value="F:NADH dehydrogenase (ubiquinone) activity"/>
    <property type="evidence" value="ECO:0007669"/>
    <property type="project" value="InterPro"/>
</dbReference>
<dbReference type="GO" id="GO:0048038">
    <property type="term" value="F:quinone binding"/>
    <property type="evidence" value="ECO:0007669"/>
    <property type="project" value="UniProtKB-KW"/>
</dbReference>
<dbReference type="GO" id="GO:0019684">
    <property type="term" value="P:photosynthesis, light reaction"/>
    <property type="evidence" value="ECO:0007669"/>
    <property type="project" value="UniProtKB-UniRule"/>
</dbReference>
<dbReference type="FunFam" id="1.20.58.1610:FF:000001">
    <property type="entry name" value="NAD(P)H-quinone oxidoreductase subunit 3, chloroplastic"/>
    <property type="match status" value="1"/>
</dbReference>
<dbReference type="Gene3D" id="1.20.58.1610">
    <property type="entry name" value="NADH:ubiquinone/plastoquinone oxidoreductase, chain 3"/>
    <property type="match status" value="1"/>
</dbReference>
<dbReference type="HAMAP" id="MF_01394">
    <property type="entry name" value="NDH1_NuoA"/>
    <property type="match status" value="1"/>
</dbReference>
<dbReference type="InterPro" id="IPR023043">
    <property type="entry name" value="NAD(P)H_OxRDtase_bac/plastid"/>
</dbReference>
<dbReference type="InterPro" id="IPR000440">
    <property type="entry name" value="NADH_UbQ/plastoQ_OxRdtase_su3"/>
</dbReference>
<dbReference type="InterPro" id="IPR038430">
    <property type="entry name" value="NDAH_ubi_oxred_su3_sf"/>
</dbReference>
<dbReference type="PANTHER" id="PTHR11058">
    <property type="entry name" value="NADH-UBIQUINONE OXIDOREDUCTASE CHAIN 3"/>
    <property type="match status" value="1"/>
</dbReference>
<dbReference type="PANTHER" id="PTHR11058:SF9">
    <property type="entry name" value="NADH-UBIQUINONE OXIDOREDUCTASE CHAIN 3"/>
    <property type="match status" value="1"/>
</dbReference>
<dbReference type="Pfam" id="PF00507">
    <property type="entry name" value="Oxidored_q4"/>
    <property type="match status" value="1"/>
</dbReference>
<feature type="chain" id="PRO_0000362836" description="NAD(P)H-quinone oxidoreductase subunit 3, chloroplastic">
    <location>
        <begin position="1"/>
        <end position="120"/>
    </location>
</feature>
<feature type="transmembrane region" description="Helical" evidence="1">
    <location>
        <begin position="9"/>
        <end position="29"/>
    </location>
</feature>
<feature type="transmembrane region" description="Helical" evidence="1">
    <location>
        <begin position="64"/>
        <end position="84"/>
    </location>
</feature>
<feature type="transmembrane region" description="Helical" evidence="1">
    <location>
        <begin position="88"/>
        <end position="108"/>
    </location>
</feature>
<geneLocation type="chloroplast"/>
<keyword id="KW-0150">Chloroplast</keyword>
<keyword id="KW-0472">Membrane</keyword>
<keyword id="KW-0520">NAD</keyword>
<keyword id="KW-0521">NADP</keyword>
<keyword id="KW-0934">Plastid</keyword>
<keyword id="KW-0618">Plastoquinone</keyword>
<keyword id="KW-0874">Quinone</keyword>
<keyword id="KW-0793">Thylakoid</keyword>
<keyword id="KW-1278">Translocase</keyword>
<keyword id="KW-0812">Transmembrane</keyword>
<keyword id="KW-1133">Transmembrane helix</keyword>
<keyword id="KW-0813">Transport</keyword>
<accession>B2LMJ8</accession>